<evidence type="ECO:0000250" key="1"/>
<evidence type="ECO:0000256" key="2">
    <source>
        <dbReference type="SAM" id="MobiDB-lite"/>
    </source>
</evidence>
<evidence type="ECO:0000269" key="3">
    <source>
    </source>
</evidence>
<evidence type="ECO:0000305" key="4"/>
<proteinExistence type="evidence at protein level"/>
<accession>P20868</accession>
<gene>
    <name type="primary">nef</name>
</gene>
<organism>
    <name type="scientific">Human immunodeficiency virus type 2 subtype A (isolate ST)</name>
    <name type="common">HIV-2</name>
    <dbReference type="NCBI Taxonomy" id="11721"/>
    <lineage>
        <taxon>Viruses</taxon>
        <taxon>Riboviria</taxon>
        <taxon>Pararnavirae</taxon>
        <taxon>Artverviricota</taxon>
        <taxon>Revtraviricetes</taxon>
        <taxon>Ortervirales</taxon>
        <taxon>Retroviridae</taxon>
        <taxon>Orthoretrovirinae</taxon>
        <taxon>Lentivirus</taxon>
        <taxon>Human immunodeficiency virus 2</taxon>
    </lineage>
</organism>
<organismHost>
    <name type="scientific">Homo sapiens</name>
    <name type="common">Human</name>
    <dbReference type="NCBI Taxonomy" id="9606"/>
</organismHost>
<keyword id="KW-0014">AIDS</keyword>
<keyword id="KW-1032">Host cell membrane</keyword>
<keyword id="KW-1043">Host membrane</keyword>
<keyword id="KW-0945">Host-virus interaction</keyword>
<keyword id="KW-0449">Lipoprotein</keyword>
<keyword id="KW-0472">Membrane</keyword>
<keyword id="KW-0519">Myristate</keyword>
<keyword id="KW-0899">Viral immunoevasion</keyword>
<keyword id="KW-0843">Virulence</keyword>
<reference key="1">
    <citation type="journal article" date="1990" name="J. Virol.">
        <title>Molecular characterization of an attenuated human immunodeficiency virus type 2 isolate.</title>
        <authorList>
            <person name="Kumar P."/>
            <person name="Hui H."/>
            <person name="Kappes J.C."/>
            <person name="Haggarty B.S."/>
            <person name="Hoxie J.A."/>
            <person name="Arya S.K."/>
            <person name="Shaw G.M."/>
            <person name="Hahn B.H."/>
        </authorList>
    </citation>
    <scope>NUCLEOTIDE SEQUENCE [GENOMIC DNA]</scope>
</reference>
<reference key="2">
    <citation type="journal article" date="1998" name="J. Virol.">
        <title>Zeta chain of the T-cell receptor interacts with nef of simian immunodeficiency virus and human immunodeficiency virus type 2.</title>
        <authorList>
            <person name="Howe A.Y."/>
            <person name="Jung J.U."/>
            <person name="Desrosiers R.C."/>
        </authorList>
    </citation>
    <scope>INTERACTION WITH HOST CD247/TCRZ</scope>
</reference>
<protein>
    <recommendedName>
        <fullName>Protein Nef</fullName>
    </recommendedName>
    <alternativeName>
        <fullName>3'ORF</fullName>
    </alternativeName>
    <alternativeName>
        <fullName>Negative factor</fullName>
        <shortName>F-protein</shortName>
    </alternativeName>
</protein>
<sequence length="255" mass="29136">MGASGSKKRSEPSRGLRERLLQTPGEASGGHWDKLGGEYLQSQEGSGRGQKSPSCEGRRYQQGDFMNTPWRAPAEGEKGSYKQQNMDDVDSDDDDLVGVPVTPRVPLREMTYRLARDMSHLIKEKGGLEGLYYSDRRRRVLDIYLEKEEGIIGDWQNYTHGPGVRYPKFFGWLWKLVPVDVPQEGDDSETHCLVHPAQTSRFDDPHGETLVWRFDPTLAFSYEAFIRYPEEFGYKSGLPEDEWKARLKARGIPFS</sequence>
<feature type="initiator methionine" description="Removed; by host" evidence="1">
    <location>
        <position position="1"/>
    </location>
</feature>
<feature type="chain" id="PRO_0000085238" description="Protein Nef">
    <location>
        <begin position="2"/>
        <end position="255"/>
    </location>
</feature>
<feature type="region of interest" description="Disordered" evidence="2">
    <location>
        <begin position="1"/>
        <end position="100"/>
    </location>
</feature>
<feature type="region of interest" description="Acidic">
    <location>
        <begin position="87"/>
        <end position="95"/>
    </location>
</feature>
<feature type="region of interest" description="Mediates dimerization" evidence="1">
    <location>
        <begin position="139"/>
        <end position="155"/>
    </location>
</feature>
<feature type="short sequence motif" description="PxxP">
    <location>
        <begin position="103"/>
        <end position="106"/>
    </location>
</feature>
<feature type="compositionally biased region" description="Basic and acidic residues" evidence="2">
    <location>
        <begin position="8"/>
        <end position="20"/>
    </location>
</feature>
<feature type="compositionally biased region" description="Polar residues" evidence="2">
    <location>
        <begin position="40"/>
        <end position="53"/>
    </location>
</feature>
<feature type="compositionally biased region" description="Acidic residues" evidence="2">
    <location>
        <begin position="87"/>
        <end position="96"/>
    </location>
</feature>
<feature type="lipid moiety-binding region" description="N-myristoyl glycine; by host" evidence="1">
    <location>
        <position position="2"/>
    </location>
</feature>
<dbReference type="EMBL" id="M31113">
    <property type="protein sequence ID" value="AAB01359.1"/>
    <property type="molecule type" value="Genomic_DNA"/>
</dbReference>
<dbReference type="PIR" id="I33943">
    <property type="entry name" value="ASLJSZ"/>
</dbReference>
<dbReference type="SMR" id="P20868"/>
<dbReference type="Proteomes" id="UP000007713">
    <property type="component" value="Segment"/>
</dbReference>
<dbReference type="GO" id="GO:0020002">
    <property type="term" value="C:host cell plasma membrane"/>
    <property type="evidence" value="ECO:0007669"/>
    <property type="project" value="UniProtKB-SubCell"/>
</dbReference>
<dbReference type="GO" id="GO:0016020">
    <property type="term" value="C:membrane"/>
    <property type="evidence" value="ECO:0007669"/>
    <property type="project" value="UniProtKB-KW"/>
</dbReference>
<dbReference type="GO" id="GO:0005525">
    <property type="term" value="F:GTP binding"/>
    <property type="evidence" value="ECO:0007669"/>
    <property type="project" value="InterPro"/>
</dbReference>
<dbReference type="Gene3D" id="3.30.62.10">
    <property type="entry name" value="Nef Regulatory Factor"/>
    <property type="match status" value="1"/>
</dbReference>
<dbReference type="InterPro" id="IPR027481">
    <property type="entry name" value="HIV-1_Nef_core_sf"/>
</dbReference>
<dbReference type="InterPro" id="IPR001558">
    <property type="entry name" value="HIV_Nef"/>
</dbReference>
<dbReference type="Pfam" id="PF00469">
    <property type="entry name" value="F-protein"/>
    <property type="match status" value="1"/>
</dbReference>
<dbReference type="SUPFAM" id="SSF55671">
    <property type="entry name" value="Regulatory factor Nef"/>
    <property type="match status" value="1"/>
</dbReference>
<name>NEF_HV2ST</name>
<comment type="function">
    <text evidence="1">Factor of infectivity and pathogenicity, required for optimal virus replication. Alters numerous pathways of T-lymphocyte function and down-regulates immunity surface molecules in order to evade host defense and increase viral infectivity. Alters the functionality of other immunity cells, like dendritic cells, monocytes/macrophages and NK cells. One of the earliest and most abundantly expressed viral proteins (By similarity).</text>
</comment>
<comment type="function">
    <text evidence="1">In infected CD4(+) T-lymphocytes, down-regulates cell surface expression of CD4, CD28, CD3, and MHC-I or MHC-II molecules.</text>
</comment>
<comment type="function">
    <text evidence="1">Interferes with TCR signaling from the cell membrane. Interacts with CD247/TCRZ (TCR zeta chain) and exert potent down-regulation of cell surface TCR/CD3 complexes (By similarity).</text>
</comment>
<comment type="function">
    <text evidence="1">Plays a role in optimizing the host cell environment for viral replication without causing cell death by apoptosis. Protects the infected cells from apoptosis in order to keep them alive until the next virus generation is ready to strike (By similarity).</text>
</comment>
<comment type="function">
    <text evidence="1">Extracellular Nef protein targets CD4(+) T-lymphocytes for apoptosis by interacting with CXCR4 surface receptors.</text>
</comment>
<comment type="subunit">
    <text evidence="1 3">Homodimer (By similarity). Interacts with host CD247/TCRZ; this interaction induces down-regulation of cell surface TCR/CD3 complexes.</text>
</comment>
<comment type="subcellular location">
    <subcellularLocation>
        <location evidence="1">Host cell membrane</location>
        <topology evidence="1">Lipid-anchor</topology>
        <orientation evidence="1">Cytoplasmic side</orientation>
    </subcellularLocation>
    <text evidence="1">Associates with the inner plasma membrane through its N-terminal domain.</text>
</comment>
<comment type="domain">
    <text evidence="1">The N-terminal domain is composed of the N-myristoyl glycine and of a cluster of positively charged amino acids. It is required for inner plasma membrane targeting of Nef and virion incorporation, and thereby for infectivity (By similarity).</text>
</comment>
<comment type="similarity">
    <text evidence="4">Belongs to the lentivirus primate group Nef protein family.</text>
</comment>